<accession>B1VAH8</accession>
<proteinExistence type="inferred from homology"/>
<dbReference type="EC" id="3.1.-.-" evidence="1"/>
<dbReference type="EMBL" id="AM422018">
    <property type="protein sequence ID" value="CAM11951.1"/>
    <property type="molecule type" value="Genomic_DNA"/>
</dbReference>
<dbReference type="SMR" id="B1VAH8"/>
<dbReference type="STRING" id="59748.PA0617"/>
<dbReference type="KEGG" id="pal:PA0617"/>
<dbReference type="eggNOG" id="COG0319">
    <property type="taxonomic scope" value="Bacteria"/>
</dbReference>
<dbReference type="Proteomes" id="UP000008323">
    <property type="component" value="Chromosome"/>
</dbReference>
<dbReference type="GO" id="GO:0005737">
    <property type="term" value="C:cytoplasm"/>
    <property type="evidence" value="ECO:0007669"/>
    <property type="project" value="UniProtKB-SubCell"/>
</dbReference>
<dbReference type="GO" id="GO:0004222">
    <property type="term" value="F:metalloendopeptidase activity"/>
    <property type="evidence" value="ECO:0007669"/>
    <property type="project" value="InterPro"/>
</dbReference>
<dbReference type="GO" id="GO:0004521">
    <property type="term" value="F:RNA endonuclease activity"/>
    <property type="evidence" value="ECO:0007669"/>
    <property type="project" value="UniProtKB-UniRule"/>
</dbReference>
<dbReference type="GO" id="GO:0008270">
    <property type="term" value="F:zinc ion binding"/>
    <property type="evidence" value="ECO:0007669"/>
    <property type="project" value="UniProtKB-UniRule"/>
</dbReference>
<dbReference type="GO" id="GO:0006364">
    <property type="term" value="P:rRNA processing"/>
    <property type="evidence" value="ECO:0007669"/>
    <property type="project" value="UniProtKB-UniRule"/>
</dbReference>
<dbReference type="Gene3D" id="3.40.390.30">
    <property type="entry name" value="Metalloproteases ('zincins'), catalytic domain"/>
    <property type="match status" value="1"/>
</dbReference>
<dbReference type="HAMAP" id="MF_00009">
    <property type="entry name" value="Endoribonucl_YbeY"/>
    <property type="match status" value="1"/>
</dbReference>
<dbReference type="InterPro" id="IPR023091">
    <property type="entry name" value="MetalPrtase_cat_dom_sf_prd"/>
</dbReference>
<dbReference type="InterPro" id="IPR002036">
    <property type="entry name" value="YbeY"/>
</dbReference>
<dbReference type="NCBIfam" id="TIGR00043">
    <property type="entry name" value="rRNA maturation RNase YbeY"/>
    <property type="match status" value="1"/>
</dbReference>
<dbReference type="PANTHER" id="PTHR46986">
    <property type="entry name" value="ENDORIBONUCLEASE YBEY, CHLOROPLASTIC"/>
    <property type="match status" value="1"/>
</dbReference>
<dbReference type="PANTHER" id="PTHR46986:SF1">
    <property type="entry name" value="ENDORIBONUCLEASE YBEY, CHLOROPLASTIC"/>
    <property type="match status" value="1"/>
</dbReference>
<dbReference type="Pfam" id="PF02130">
    <property type="entry name" value="YbeY"/>
    <property type="match status" value="1"/>
</dbReference>
<dbReference type="SUPFAM" id="SSF55486">
    <property type="entry name" value="Metalloproteases ('zincins'), catalytic domain"/>
    <property type="match status" value="1"/>
</dbReference>
<evidence type="ECO:0000255" key="1">
    <source>
        <dbReference type="HAMAP-Rule" id="MF_00009"/>
    </source>
</evidence>
<feature type="chain" id="PRO_1000199987" description="Endoribonuclease YbeY">
    <location>
        <begin position="1"/>
        <end position="144"/>
    </location>
</feature>
<feature type="binding site" evidence="1">
    <location>
        <position position="108"/>
    </location>
    <ligand>
        <name>Zn(2+)</name>
        <dbReference type="ChEBI" id="CHEBI:29105"/>
        <note>catalytic</note>
    </ligand>
</feature>
<feature type="binding site" evidence="1">
    <location>
        <position position="112"/>
    </location>
    <ligand>
        <name>Zn(2+)</name>
        <dbReference type="ChEBI" id="CHEBI:29105"/>
        <note>catalytic</note>
    </ligand>
</feature>
<feature type="binding site" evidence="1">
    <location>
        <position position="118"/>
    </location>
    <ligand>
        <name>Zn(2+)</name>
        <dbReference type="ChEBI" id="CHEBI:29105"/>
        <note>catalytic</note>
    </ligand>
</feature>
<name>YBEY_PHYAS</name>
<protein>
    <recommendedName>
        <fullName evidence="1">Endoribonuclease YbeY</fullName>
        <ecNumber evidence="1">3.1.-.-</ecNumber>
    </recommendedName>
</protein>
<organism>
    <name type="scientific">Phytoplasma australiense</name>
    <dbReference type="NCBI Taxonomy" id="59748"/>
    <lineage>
        <taxon>Bacteria</taxon>
        <taxon>Bacillati</taxon>
        <taxon>Mycoplasmatota</taxon>
        <taxon>Mollicutes</taxon>
        <taxon>Acholeplasmatales</taxon>
        <taxon>Acholeplasmataceae</taxon>
        <taxon>Candidatus Phytoplasma</taxon>
        <taxon>16SrXII (Stolbur group)</taxon>
    </lineage>
</organism>
<reference key="1">
    <citation type="journal article" date="2008" name="J. Bacteriol.">
        <title>Comparative genome analysis of 'Candidatus Phytoplasma australiense' (subgroup tuf-Australia I; rp-A) and 'Ca. Phytoplasma asteris' strains OY-M and AY-WB.</title>
        <authorList>
            <person name="Tran-Nguyen L.T."/>
            <person name="Kube M."/>
            <person name="Schneider B."/>
            <person name="Reinhardt R."/>
            <person name="Gibb K.S."/>
        </authorList>
    </citation>
    <scope>NUCLEOTIDE SEQUENCE [LARGE SCALE GENOMIC DNA]</scope>
</reference>
<keyword id="KW-0963">Cytoplasm</keyword>
<keyword id="KW-0255">Endonuclease</keyword>
<keyword id="KW-0378">Hydrolase</keyword>
<keyword id="KW-0479">Metal-binding</keyword>
<keyword id="KW-0540">Nuclease</keyword>
<keyword id="KW-1185">Reference proteome</keyword>
<keyword id="KW-0690">Ribosome biogenesis</keyword>
<keyword id="KW-0698">rRNA processing</keyword>
<keyword id="KW-0862">Zinc</keyword>
<gene>
    <name evidence="1" type="primary">ybeY</name>
    <name type="ordered locus">PA0617</name>
</gene>
<sequence>MKIQIHNHTSFKIDSYQQLLIQLFSQIKENNQMHLVFVTKEKIKQLNTFFRKKNFVTDVLSFPNEFSFNPNLKDDSLGDVFICFEQAQLQAQKLLHSLEREIAFLVVHGFLHLKGYQHNNEEELEKMIHLQEKILKKINLERKK</sequence>
<comment type="function">
    <text evidence="1">Single strand-specific metallo-endoribonuclease involved in late-stage 70S ribosome quality control and in maturation of the 3' terminus of the 16S rRNA.</text>
</comment>
<comment type="cofactor">
    <cofactor evidence="1">
        <name>Zn(2+)</name>
        <dbReference type="ChEBI" id="CHEBI:29105"/>
    </cofactor>
    <text evidence="1">Binds 1 zinc ion.</text>
</comment>
<comment type="subcellular location">
    <subcellularLocation>
        <location evidence="1">Cytoplasm</location>
    </subcellularLocation>
</comment>
<comment type="similarity">
    <text evidence="1">Belongs to the endoribonuclease YbeY family.</text>
</comment>